<gene>
    <name evidence="2" type="primary">tuf</name>
    <name type="ordered locus">ACL_0188</name>
</gene>
<comment type="function">
    <text evidence="2">GTP hydrolase that promotes the GTP-dependent binding of aminoacyl-tRNA to the A-site of ribosomes during protein biosynthesis.</text>
</comment>
<comment type="catalytic activity">
    <reaction evidence="2">
        <text>GTP + H2O = GDP + phosphate + H(+)</text>
        <dbReference type="Rhea" id="RHEA:19669"/>
        <dbReference type="ChEBI" id="CHEBI:15377"/>
        <dbReference type="ChEBI" id="CHEBI:15378"/>
        <dbReference type="ChEBI" id="CHEBI:37565"/>
        <dbReference type="ChEBI" id="CHEBI:43474"/>
        <dbReference type="ChEBI" id="CHEBI:58189"/>
        <dbReference type="EC" id="3.6.5.3"/>
    </reaction>
    <physiologicalReaction direction="left-to-right" evidence="2">
        <dbReference type="Rhea" id="RHEA:19670"/>
    </physiologicalReaction>
</comment>
<comment type="subunit">
    <text evidence="2">Monomer.</text>
</comment>
<comment type="subcellular location">
    <subcellularLocation>
        <location evidence="2">Cytoplasm</location>
    </subcellularLocation>
</comment>
<comment type="similarity">
    <text evidence="2">Belongs to the TRAFAC class translation factor GTPase superfamily. Classic translation factor GTPase family. EF-Tu/EF-1A subfamily.</text>
</comment>
<evidence type="ECO:0000250" key="1"/>
<evidence type="ECO:0000255" key="2">
    <source>
        <dbReference type="HAMAP-Rule" id="MF_00118"/>
    </source>
</evidence>
<name>EFTU_ACHLI</name>
<feature type="chain" id="PRO_1000076092" description="Elongation factor Tu">
    <location>
        <begin position="1"/>
        <end position="395"/>
    </location>
</feature>
<feature type="domain" description="tr-type G">
    <location>
        <begin position="10"/>
        <end position="204"/>
    </location>
</feature>
<feature type="region of interest" description="G1" evidence="1">
    <location>
        <begin position="19"/>
        <end position="26"/>
    </location>
</feature>
<feature type="region of interest" description="G2" evidence="1">
    <location>
        <begin position="60"/>
        <end position="64"/>
    </location>
</feature>
<feature type="region of interest" description="G3" evidence="1">
    <location>
        <begin position="81"/>
        <end position="84"/>
    </location>
</feature>
<feature type="region of interest" description="G4" evidence="1">
    <location>
        <begin position="136"/>
        <end position="139"/>
    </location>
</feature>
<feature type="region of interest" description="G5" evidence="1">
    <location>
        <begin position="174"/>
        <end position="176"/>
    </location>
</feature>
<feature type="binding site" evidence="2">
    <location>
        <begin position="19"/>
        <end position="26"/>
    </location>
    <ligand>
        <name>GTP</name>
        <dbReference type="ChEBI" id="CHEBI:37565"/>
    </ligand>
</feature>
<feature type="binding site" evidence="2">
    <location>
        <position position="26"/>
    </location>
    <ligand>
        <name>Mg(2+)</name>
        <dbReference type="ChEBI" id="CHEBI:18420"/>
    </ligand>
</feature>
<feature type="binding site" evidence="2">
    <location>
        <begin position="81"/>
        <end position="85"/>
    </location>
    <ligand>
        <name>GTP</name>
        <dbReference type="ChEBI" id="CHEBI:37565"/>
    </ligand>
</feature>
<feature type="binding site" evidence="2">
    <location>
        <begin position="136"/>
        <end position="139"/>
    </location>
    <ligand>
        <name>GTP</name>
        <dbReference type="ChEBI" id="CHEBI:37565"/>
    </ligand>
</feature>
<accession>A9NEN4</accession>
<keyword id="KW-0963">Cytoplasm</keyword>
<keyword id="KW-0251">Elongation factor</keyword>
<keyword id="KW-0342">GTP-binding</keyword>
<keyword id="KW-0378">Hydrolase</keyword>
<keyword id="KW-0460">Magnesium</keyword>
<keyword id="KW-0479">Metal-binding</keyword>
<keyword id="KW-0547">Nucleotide-binding</keyword>
<keyword id="KW-0648">Protein biosynthesis</keyword>
<keyword id="KW-1185">Reference proteome</keyword>
<proteinExistence type="inferred from homology"/>
<sequence>MAKQKFERTKPHVNVGTIGHVDHGKTTLTAAITSVLAGKGLATKRDYNQIDGAPEEKARGITINASHVEYETVNRHYAHVDCPGHADYVKNMITGAAQMDGAILVVSAADGPMPQTREHILLSRQVGVPKLVVFLNKADLVDDEELLDLVEMEVRELLSEYDFPGDDIPVIKGSALGALEGKPEWVAKVEELMDAVDAYIDTPLRATDKPFMMPVEDVFTITGRGTVATGRVDRGIVKVGDQVEIVGITDTKTTTVTGVEMFRKLLDQAEAGDNIGALLRGVDREGVERGQVLSKPGTVKPHAKFTAQIYVLSKEEGGRHTAFFSNYRPQFYFRTTDITGIITLGEGTEMVMPGDNAEVTVELIHPIALEEGTKFSIREGGRTVASGSVVKILAD</sequence>
<reference key="1">
    <citation type="journal article" date="2011" name="J. Bacteriol.">
        <title>Complete genome and proteome of Acholeplasma laidlawii.</title>
        <authorList>
            <person name="Lazarev V.N."/>
            <person name="Levitskii S.A."/>
            <person name="Basovskii Y.I."/>
            <person name="Chukin M.M."/>
            <person name="Akopian T.A."/>
            <person name="Vereshchagin V.V."/>
            <person name="Kostrjukova E.S."/>
            <person name="Kovaleva G.Y."/>
            <person name="Kazanov M.D."/>
            <person name="Malko D.B."/>
            <person name="Vitreschak A.G."/>
            <person name="Sernova N.V."/>
            <person name="Gelfand M.S."/>
            <person name="Demina I.A."/>
            <person name="Serebryakova M.V."/>
            <person name="Galyamina M.A."/>
            <person name="Vtyurin N.N."/>
            <person name="Rogov S.I."/>
            <person name="Alexeev D.G."/>
            <person name="Ladygina V.G."/>
            <person name="Govorun V.M."/>
        </authorList>
    </citation>
    <scope>NUCLEOTIDE SEQUENCE [LARGE SCALE GENOMIC DNA]</scope>
    <source>
        <strain>PG-8A</strain>
    </source>
</reference>
<organism>
    <name type="scientific">Acholeplasma laidlawii (strain PG-8A)</name>
    <dbReference type="NCBI Taxonomy" id="441768"/>
    <lineage>
        <taxon>Bacteria</taxon>
        <taxon>Bacillati</taxon>
        <taxon>Mycoplasmatota</taxon>
        <taxon>Mollicutes</taxon>
        <taxon>Acholeplasmatales</taxon>
        <taxon>Acholeplasmataceae</taxon>
        <taxon>Acholeplasma</taxon>
    </lineage>
</organism>
<protein>
    <recommendedName>
        <fullName evidence="2">Elongation factor Tu</fullName>
        <shortName evidence="2">EF-Tu</shortName>
        <ecNumber evidence="2">3.6.5.3</ecNumber>
    </recommendedName>
</protein>
<dbReference type="EC" id="3.6.5.3" evidence="2"/>
<dbReference type="EMBL" id="CP000896">
    <property type="protein sequence ID" value="ABX80814.1"/>
    <property type="molecule type" value="Genomic_DNA"/>
</dbReference>
<dbReference type="RefSeq" id="WP_012242145.1">
    <property type="nucleotide sequence ID" value="NC_010163.1"/>
</dbReference>
<dbReference type="SMR" id="A9NEN4"/>
<dbReference type="STRING" id="441768.ACL_0188"/>
<dbReference type="GeneID" id="41338380"/>
<dbReference type="KEGG" id="acl:ACL_0188"/>
<dbReference type="eggNOG" id="COG0050">
    <property type="taxonomic scope" value="Bacteria"/>
</dbReference>
<dbReference type="HOGENOM" id="CLU_007265_0_0_14"/>
<dbReference type="OrthoDB" id="9804504at2"/>
<dbReference type="Proteomes" id="UP000008558">
    <property type="component" value="Chromosome"/>
</dbReference>
<dbReference type="GO" id="GO:0005829">
    <property type="term" value="C:cytosol"/>
    <property type="evidence" value="ECO:0007669"/>
    <property type="project" value="TreeGrafter"/>
</dbReference>
<dbReference type="GO" id="GO:0005525">
    <property type="term" value="F:GTP binding"/>
    <property type="evidence" value="ECO:0007669"/>
    <property type="project" value="UniProtKB-UniRule"/>
</dbReference>
<dbReference type="GO" id="GO:0003924">
    <property type="term" value="F:GTPase activity"/>
    <property type="evidence" value="ECO:0007669"/>
    <property type="project" value="InterPro"/>
</dbReference>
<dbReference type="GO" id="GO:0003746">
    <property type="term" value="F:translation elongation factor activity"/>
    <property type="evidence" value="ECO:0007669"/>
    <property type="project" value="UniProtKB-UniRule"/>
</dbReference>
<dbReference type="CDD" id="cd01884">
    <property type="entry name" value="EF_Tu"/>
    <property type="match status" value="1"/>
</dbReference>
<dbReference type="CDD" id="cd03697">
    <property type="entry name" value="EFTU_II"/>
    <property type="match status" value="1"/>
</dbReference>
<dbReference type="CDD" id="cd03707">
    <property type="entry name" value="EFTU_III"/>
    <property type="match status" value="1"/>
</dbReference>
<dbReference type="FunFam" id="2.40.30.10:FF:000001">
    <property type="entry name" value="Elongation factor Tu"/>
    <property type="match status" value="1"/>
</dbReference>
<dbReference type="FunFam" id="3.40.50.300:FF:000003">
    <property type="entry name" value="Elongation factor Tu"/>
    <property type="match status" value="1"/>
</dbReference>
<dbReference type="Gene3D" id="3.40.50.300">
    <property type="entry name" value="P-loop containing nucleotide triphosphate hydrolases"/>
    <property type="match status" value="1"/>
</dbReference>
<dbReference type="Gene3D" id="2.40.30.10">
    <property type="entry name" value="Translation factors"/>
    <property type="match status" value="2"/>
</dbReference>
<dbReference type="HAMAP" id="MF_00118_B">
    <property type="entry name" value="EF_Tu_B"/>
    <property type="match status" value="1"/>
</dbReference>
<dbReference type="InterPro" id="IPR041709">
    <property type="entry name" value="EF-Tu_GTP-bd"/>
</dbReference>
<dbReference type="InterPro" id="IPR050055">
    <property type="entry name" value="EF-Tu_GTPase"/>
</dbReference>
<dbReference type="InterPro" id="IPR004161">
    <property type="entry name" value="EFTu-like_2"/>
</dbReference>
<dbReference type="InterPro" id="IPR033720">
    <property type="entry name" value="EFTU_2"/>
</dbReference>
<dbReference type="InterPro" id="IPR031157">
    <property type="entry name" value="G_TR_CS"/>
</dbReference>
<dbReference type="InterPro" id="IPR027417">
    <property type="entry name" value="P-loop_NTPase"/>
</dbReference>
<dbReference type="InterPro" id="IPR005225">
    <property type="entry name" value="Small_GTP-bd"/>
</dbReference>
<dbReference type="InterPro" id="IPR000795">
    <property type="entry name" value="T_Tr_GTP-bd_dom"/>
</dbReference>
<dbReference type="InterPro" id="IPR009000">
    <property type="entry name" value="Transl_B-barrel_sf"/>
</dbReference>
<dbReference type="InterPro" id="IPR009001">
    <property type="entry name" value="Transl_elong_EF1A/Init_IF2_C"/>
</dbReference>
<dbReference type="InterPro" id="IPR004541">
    <property type="entry name" value="Transl_elong_EFTu/EF1A_bac/org"/>
</dbReference>
<dbReference type="InterPro" id="IPR004160">
    <property type="entry name" value="Transl_elong_EFTu/EF1A_C"/>
</dbReference>
<dbReference type="NCBIfam" id="TIGR00485">
    <property type="entry name" value="EF-Tu"/>
    <property type="match status" value="1"/>
</dbReference>
<dbReference type="NCBIfam" id="NF000766">
    <property type="entry name" value="PRK00049.1"/>
    <property type="match status" value="1"/>
</dbReference>
<dbReference type="NCBIfam" id="NF009372">
    <property type="entry name" value="PRK12735.1"/>
    <property type="match status" value="1"/>
</dbReference>
<dbReference type="NCBIfam" id="NF009373">
    <property type="entry name" value="PRK12736.1"/>
    <property type="match status" value="1"/>
</dbReference>
<dbReference type="NCBIfam" id="TIGR00231">
    <property type="entry name" value="small_GTP"/>
    <property type="match status" value="1"/>
</dbReference>
<dbReference type="PANTHER" id="PTHR43721:SF22">
    <property type="entry name" value="ELONGATION FACTOR TU, MITOCHONDRIAL"/>
    <property type="match status" value="1"/>
</dbReference>
<dbReference type="PANTHER" id="PTHR43721">
    <property type="entry name" value="ELONGATION FACTOR TU-RELATED"/>
    <property type="match status" value="1"/>
</dbReference>
<dbReference type="Pfam" id="PF00009">
    <property type="entry name" value="GTP_EFTU"/>
    <property type="match status" value="1"/>
</dbReference>
<dbReference type="Pfam" id="PF03144">
    <property type="entry name" value="GTP_EFTU_D2"/>
    <property type="match status" value="1"/>
</dbReference>
<dbReference type="Pfam" id="PF03143">
    <property type="entry name" value="GTP_EFTU_D3"/>
    <property type="match status" value="1"/>
</dbReference>
<dbReference type="PRINTS" id="PR00315">
    <property type="entry name" value="ELONGATNFCT"/>
</dbReference>
<dbReference type="SUPFAM" id="SSF50465">
    <property type="entry name" value="EF-Tu/eEF-1alpha/eIF2-gamma C-terminal domain"/>
    <property type="match status" value="1"/>
</dbReference>
<dbReference type="SUPFAM" id="SSF52540">
    <property type="entry name" value="P-loop containing nucleoside triphosphate hydrolases"/>
    <property type="match status" value="1"/>
</dbReference>
<dbReference type="SUPFAM" id="SSF50447">
    <property type="entry name" value="Translation proteins"/>
    <property type="match status" value="1"/>
</dbReference>
<dbReference type="PROSITE" id="PS00301">
    <property type="entry name" value="G_TR_1"/>
    <property type="match status" value="1"/>
</dbReference>
<dbReference type="PROSITE" id="PS51722">
    <property type="entry name" value="G_TR_2"/>
    <property type="match status" value="1"/>
</dbReference>